<dbReference type="EMBL" id="AE017223">
    <property type="protein sequence ID" value="AAX74173.1"/>
    <property type="molecule type" value="Genomic_DNA"/>
</dbReference>
<dbReference type="RefSeq" id="WP_002963926.1">
    <property type="nucleotide sequence ID" value="NC_006932.1"/>
</dbReference>
<dbReference type="SMR" id="Q57DW1"/>
<dbReference type="EnsemblBacteria" id="AAX74173">
    <property type="protein sequence ID" value="AAX74173"/>
    <property type="gene ID" value="BruAb1_0805"/>
</dbReference>
<dbReference type="GeneID" id="93016820"/>
<dbReference type="KEGG" id="bmb:BruAb1_0805"/>
<dbReference type="HOGENOM" id="CLU_082184_2_0_5"/>
<dbReference type="Proteomes" id="UP000000540">
    <property type="component" value="Chromosome I"/>
</dbReference>
<dbReference type="GO" id="GO:0022625">
    <property type="term" value="C:cytosolic large ribosomal subunit"/>
    <property type="evidence" value="ECO:0007669"/>
    <property type="project" value="TreeGrafter"/>
</dbReference>
<dbReference type="GO" id="GO:0003729">
    <property type="term" value="F:mRNA binding"/>
    <property type="evidence" value="ECO:0007669"/>
    <property type="project" value="TreeGrafter"/>
</dbReference>
<dbReference type="GO" id="GO:0003735">
    <property type="term" value="F:structural constituent of ribosome"/>
    <property type="evidence" value="ECO:0007669"/>
    <property type="project" value="InterPro"/>
</dbReference>
<dbReference type="GO" id="GO:0017148">
    <property type="term" value="P:negative regulation of translation"/>
    <property type="evidence" value="ECO:0007669"/>
    <property type="project" value="TreeGrafter"/>
</dbReference>
<dbReference type="GO" id="GO:0006412">
    <property type="term" value="P:translation"/>
    <property type="evidence" value="ECO:0007669"/>
    <property type="project" value="UniProtKB-UniRule"/>
</dbReference>
<dbReference type="CDD" id="cd00392">
    <property type="entry name" value="Ribosomal_L13"/>
    <property type="match status" value="1"/>
</dbReference>
<dbReference type="FunFam" id="3.90.1180.10:FF:000001">
    <property type="entry name" value="50S ribosomal protein L13"/>
    <property type="match status" value="1"/>
</dbReference>
<dbReference type="Gene3D" id="3.90.1180.10">
    <property type="entry name" value="Ribosomal protein L13"/>
    <property type="match status" value="1"/>
</dbReference>
<dbReference type="HAMAP" id="MF_01366">
    <property type="entry name" value="Ribosomal_uL13"/>
    <property type="match status" value="1"/>
</dbReference>
<dbReference type="InterPro" id="IPR005822">
    <property type="entry name" value="Ribosomal_uL13"/>
</dbReference>
<dbReference type="InterPro" id="IPR005823">
    <property type="entry name" value="Ribosomal_uL13_bac-type"/>
</dbReference>
<dbReference type="InterPro" id="IPR036899">
    <property type="entry name" value="Ribosomal_uL13_sf"/>
</dbReference>
<dbReference type="NCBIfam" id="TIGR01066">
    <property type="entry name" value="rplM_bact"/>
    <property type="match status" value="1"/>
</dbReference>
<dbReference type="PANTHER" id="PTHR11545:SF2">
    <property type="entry name" value="LARGE RIBOSOMAL SUBUNIT PROTEIN UL13M"/>
    <property type="match status" value="1"/>
</dbReference>
<dbReference type="PANTHER" id="PTHR11545">
    <property type="entry name" value="RIBOSOMAL PROTEIN L13"/>
    <property type="match status" value="1"/>
</dbReference>
<dbReference type="Pfam" id="PF00572">
    <property type="entry name" value="Ribosomal_L13"/>
    <property type="match status" value="1"/>
</dbReference>
<dbReference type="PIRSF" id="PIRSF002181">
    <property type="entry name" value="Ribosomal_L13"/>
    <property type="match status" value="1"/>
</dbReference>
<dbReference type="SUPFAM" id="SSF52161">
    <property type="entry name" value="Ribosomal protein L13"/>
    <property type="match status" value="1"/>
</dbReference>
<feature type="chain" id="PRO_0000261695" description="Large ribosomal subunit protein uL13">
    <location>
        <begin position="1"/>
        <end position="154"/>
    </location>
</feature>
<protein>
    <recommendedName>
        <fullName evidence="1">Large ribosomal subunit protein uL13</fullName>
    </recommendedName>
    <alternativeName>
        <fullName evidence="2">50S ribosomal protein L13</fullName>
    </alternativeName>
</protein>
<name>RL13_BRUAB</name>
<reference key="1">
    <citation type="journal article" date="2005" name="J. Bacteriol.">
        <title>Completion of the genome sequence of Brucella abortus and comparison to the highly similar genomes of Brucella melitensis and Brucella suis.</title>
        <authorList>
            <person name="Halling S.M."/>
            <person name="Peterson-Burch B.D."/>
            <person name="Bricker B.J."/>
            <person name="Zuerner R.L."/>
            <person name="Qing Z."/>
            <person name="Li L.-L."/>
            <person name="Kapur V."/>
            <person name="Alt D.P."/>
            <person name="Olsen S.C."/>
        </authorList>
    </citation>
    <scope>NUCLEOTIDE SEQUENCE [LARGE SCALE GENOMIC DNA]</scope>
    <source>
        <strain>9-941</strain>
    </source>
</reference>
<keyword id="KW-0687">Ribonucleoprotein</keyword>
<keyword id="KW-0689">Ribosomal protein</keyword>
<proteinExistence type="inferred from homology"/>
<sequence length="154" mass="17301">MATFSQKPAEVVKKWVLIDAEGLVVGRLASLVANRLRGKHKATFTPHVDDGDNVIIINADKVVLTGKKYTDKKYYWHTGHPGGIKERTARQILEGRFPERVLEKAIERMIPRGPLGRRQMKNLRVNAGPNHQHEAQQPEVLDVAALNRKNKGNA</sequence>
<accession>Q57DW1</accession>
<comment type="function">
    <text evidence="1">This protein is one of the early assembly proteins of the 50S ribosomal subunit, although it is not seen to bind rRNA by itself. It is important during the early stages of 50S assembly.</text>
</comment>
<comment type="subunit">
    <text evidence="1">Part of the 50S ribosomal subunit.</text>
</comment>
<comment type="similarity">
    <text evidence="1">Belongs to the universal ribosomal protein uL13 family.</text>
</comment>
<gene>
    <name evidence="1" type="primary">rplM</name>
    <name type="ordered locus">BruAb1_0805</name>
</gene>
<organism>
    <name type="scientific">Brucella abortus biovar 1 (strain 9-941)</name>
    <dbReference type="NCBI Taxonomy" id="262698"/>
    <lineage>
        <taxon>Bacteria</taxon>
        <taxon>Pseudomonadati</taxon>
        <taxon>Pseudomonadota</taxon>
        <taxon>Alphaproteobacteria</taxon>
        <taxon>Hyphomicrobiales</taxon>
        <taxon>Brucellaceae</taxon>
        <taxon>Brucella/Ochrobactrum group</taxon>
        <taxon>Brucella</taxon>
    </lineage>
</organism>
<evidence type="ECO:0000255" key="1">
    <source>
        <dbReference type="HAMAP-Rule" id="MF_01366"/>
    </source>
</evidence>
<evidence type="ECO:0000305" key="2"/>